<dbReference type="EC" id="6.1.1.22"/>
<dbReference type="EMBL" id="BC105358">
    <property type="protein sequence ID" value="AAI05359.1"/>
    <property type="molecule type" value="mRNA"/>
</dbReference>
<dbReference type="RefSeq" id="NP_001040037.1">
    <property type="nucleotide sequence ID" value="NM_001046572.2"/>
</dbReference>
<dbReference type="SMR" id="Q2KJG3"/>
<dbReference type="FunCoup" id="Q2KJG3">
    <property type="interactions" value="2990"/>
</dbReference>
<dbReference type="STRING" id="9913.ENSBTAP00000025659"/>
<dbReference type="PaxDb" id="9913-ENSBTAP00000025659"/>
<dbReference type="PeptideAtlas" id="Q2KJG3"/>
<dbReference type="GeneID" id="616033"/>
<dbReference type="KEGG" id="bta:616033"/>
<dbReference type="CTD" id="4677"/>
<dbReference type="eggNOG" id="KOG0555">
    <property type="taxonomic scope" value="Eukaryota"/>
</dbReference>
<dbReference type="InParanoid" id="Q2KJG3"/>
<dbReference type="OrthoDB" id="1931232at2759"/>
<dbReference type="Proteomes" id="UP000009136">
    <property type="component" value="Unplaced"/>
</dbReference>
<dbReference type="GO" id="GO:0005737">
    <property type="term" value="C:cytoplasm"/>
    <property type="evidence" value="ECO:0000318"/>
    <property type="project" value="GO_Central"/>
</dbReference>
<dbReference type="GO" id="GO:0004816">
    <property type="term" value="F:asparagine-tRNA ligase activity"/>
    <property type="evidence" value="ECO:0000318"/>
    <property type="project" value="GO_Central"/>
</dbReference>
<dbReference type="GO" id="GO:0005524">
    <property type="term" value="F:ATP binding"/>
    <property type="evidence" value="ECO:0007669"/>
    <property type="project" value="UniProtKB-KW"/>
</dbReference>
<dbReference type="GO" id="GO:0003676">
    <property type="term" value="F:nucleic acid binding"/>
    <property type="evidence" value="ECO:0007669"/>
    <property type="project" value="InterPro"/>
</dbReference>
<dbReference type="GO" id="GO:0006421">
    <property type="term" value="P:asparaginyl-tRNA aminoacylation"/>
    <property type="evidence" value="ECO:0000318"/>
    <property type="project" value="GO_Central"/>
</dbReference>
<dbReference type="CDD" id="cd04323">
    <property type="entry name" value="AsnRS_cyto_like_N"/>
    <property type="match status" value="1"/>
</dbReference>
<dbReference type="CDD" id="cd00776">
    <property type="entry name" value="AsxRS_core"/>
    <property type="match status" value="1"/>
</dbReference>
<dbReference type="FunFam" id="2.40.50.140:FF:000151">
    <property type="entry name" value="Asparagine--tRNA ligase, cytoplasmic"/>
    <property type="match status" value="1"/>
</dbReference>
<dbReference type="FunFam" id="3.30.930.10:FF:000040">
    <property type="entry name" value="Asparagine--tRNA ligase, cytoplasmic"/>
    <property type="match status" value="1"/>
</dbReference>
<dbReference type="FunFam" id="3.30.1910.20:FF:000001">
    <property type="entry name" value="asparagine--tRNA ligase, cytoplasmic"/>
    <property type="match status" value="1"/>
</dbReference>
<dbReference type="Gene3D" id="3.30.1910.20">
    <property type="entry name" value="asparaginyl-tRNA synthetase, N-terminal domain"/>
    <property type="match status" value="1"/>
</dbReference>
<dbReference type="Gene3D" id="3.30.930.10">
    <property type="entry name" value="Bira Bifunctional Protein, Domain 2"/>
    <property type="match status" value="1"/>
</dbReference>
<dbReference type="Gene3D" id="2.40.50.140">
    <property type="entry name" value="Nucleic acid-binding proteins"/>
    <property type="match status" value="1"/>
</dbReference>
<dbReference type="InterPro" id="IPR004364">
    <property type="entry name" value="Aa-tRNA-synt_II"/>
</dbReference>
<dbReference type="InterPro" id="IPR006195">
    <property type="entry name" value="aa-tRNA-synth_II"/>
</dbReference>
<dbReference type="InterPro" id="IPR045864">
    <property type="entry name" value="aa-tRNA-synth_II/BPL/LPL"/>
</dbReference>
<dbReference type="InterPro" id="IPR004522">
    <property type="entry name" value="Asn-tRNA-ligase"/>
</dbReference>
<dbReference type="InterPro" id="IPR048952">
    <property type="entry name" value="AsnRS_N"/>
</dbReference>
<dbReference type="InterPro" id="IPR002312">
    <property type="entry name" value="Asp/Asn-tRNA-synth_IIb"/>
</dbReference>
<dbReference type="InterPro" id="IPR012340">
    <property type="entry name" value="NA-bd_OB-fold"/>
</dbReference>
<dbReference type="InterPro" id="IPR004365">
    <property type="entry name" value="NA-bd_OB_tRNA"/>
</dbReference>
<dbReference type="NCBIfam" id="TIGR00457">
    <property type="entry name" value="asnS"/>
    <property type="match status" value="1"/>
</dbReference>
<dbReference type="PANTHER" id="PTHR22594:SF16">
    <property type="entry name" value="ASPARAGINE--TRNA LIGASE, CYTOPLASMIC"/>
    <property type="match status" value="1"/>
</dbReference>
<dbReference type="PANTHER" id="PTHR22594">
    <property type="entry name" value="ASPARTYL/LYSYL-TRNA SYNTHETASE"/>
    <property type="match status" value="1"/>
</dbReference>
<dbReference type="Pfam" id="PF20917">
    <property type="entry name" value="AsnRS_N"/>
    <property type="match status" value="1"/>
</dbReference>
<dbReference type="Pfam" id="PF00152">
    <property type="entry name" value="tRNA-synt_2"/>
    <property type="match status" value="1"/>
</dbReference>
<dbReference type="Pfam" id="PF01336">
    <property type="entry name" value="tRNA_anti-codon"/>
    <property type="match status" value="1"/>
</dbReference>
<dbReference type="PRINTS" id="PR01042">
    <property type="entry name" value="TRNASYNTHASP"/>
</dbReference>
<dbReference type="SUPFAM" id="SSF55681">
    <property type="entry name" value="Class II aaRS and biotin synthetases"/>
    <property type="match status" value="1"/>
</dbReference>
<dbReference type="SUPFAM" id="SSF50249">
    <property type="entry name" value="Nucleic acid-binding proteins"/>
    <property type="match status" value="1"/>
</dbReference>
<dbReference type="PROSITE" id="PS50862">
    <property type="entry name" value="AA_TRNA_LIGASE_II"/>
    <property type="match status" value="1"/>
</dbReference>
<keyword id="KW-0007">Acetylation</keyword>
<keyword id="KW-0030">Aminoacyl-tRNA synthetase</keyword>
<keyword id="KW-0067">ATP-binding</keyword>
<keyword id="KW-0963">Cytoplasm</keyword>
<keyword id="KW-0436">Ligase</keyword>
<keyword id="KW-0547">Nucleotide-binding</keyword>
<keyword id="KW-0597">Phosphoprotein</keyword>
<keyword id="KW-0648">Protein biosynthesis</keyword>
<keyword id="KW-1185">Reference proteome</keyword>
<organism>
    <name type="scientific">Bos taurus</name>
    <name type="common">Bovine</name>
    <dbReference type="NCBI Taxonomy" id="9913"/>
    <lineage>
        <taxon>Eukaryota</taxon>
        <taxon>Metazoa</taxon>
        <taxon>Chordata</taxon>
        <taxon>Craniata</taxon>
        <taxon>Vertebrata</taxon>
        <taxon>Euteleostomi</taxon>
        <taxon>Mammalia</taxon>
        <taxon>Eutheria</taxon>
        <taxon>Laurasiatheria</taxon>
        <taxon>Artiodactyla</taxon>
        <taxon>Ruminantia</taxon>
        <taxon>Pecora</taxon>
        <taxon>Bovidae</taxon>
        <taxon>Bovinae</taxon>
        <taxon>Bos</taxon>
    </lineage>
</organism>
<gene>
    <name type="primary">NARS</name>
</gene>
<accession>Q2KJG3</accession>
<evidence type="ECO:0000250" key="1"/>
<evidence type="ECO:0000250" key="2">
    <source>
        <dbReference type="UniProtKB" id="O43776"/>
    </source>
</evidence>
<evidence type="ECO:0000250" key="3">
    <source>
        <dbReference type="UniProtKB" id="Q8BP47"/>
    </source>
</evidence>
<evidence type="ECO:0000305" key="4"/>
<reference key="1">
    <citation type="submission" date="2005-09" db="EMBL/GenBank/DDBJ databases">
        <authorList>
            <consortium name="NIH - Mammalian Gene Collection (MGC) project"/>
        </authorList>
    </citation>
    <scope>NUCLEOTIDE SEQUENCE [LARGE SCALE MRNA]</scope>
    <source>
        <strain>Crossbred X Angus</strain>
        <tissue>Ileum</tissue>
    </source>
</reference>
<name>SYNC_BOVIN</name>
<comment type="catalytic activity">
    <reaction>
        <text>tRNA(Asn) + L-asparagine + ATP = L-asparaginyl-tRNA(Asn) + AMP + diphosphate + H(+)</text>
        <dbReference type="Rhea" id="RHEA:11180"/>
        <dbReference type="Rhea" id="RHEA-COMP:9659"/>
        <dbReference type="Rhea" id="RHEA-COMP:9674"/>
        <dbReference type="ChEBI" id="CHEBI:15378"/>
        <dbReference type="ChEBI" id="CHEBI:30616"/>
        <dbReference type="ChEBI" id="CHEBI:33019"/>
        <dbReference type="ChEBI" id="CHEBI:58048"/>
        <dbReference type="ChEBI" id="CHEBI:78442"/>
        <dbReference type="ChEBI" id="CHEBI:78515"/>
        <dbReference type="ChEBI" id="CHEBI:456215"/>
        <dbReference type="EC" id="6.1.1.22"/>
    </reaction>
</comment>
<comment type="subcellular location">
    <subcellularLocation>
        <location evidence="1">Cytoplasm</location>
    </subcellularLocation>
</comment>
<comment type="similarity">
    <text evidence="4">Belongs to the class-II aminoacyl-tRNA synthetase family.</text>
</comment>
<feature type="chain" id="PRO_0000284071" description="Asparagine--tRNA ligase, cytoplasmic">
    <location>
        <begin position="1"/>
        <end position="559"/>
    </location>
</feature>
<feature type="modified residue" description="Phosphoserine" evidence="2">
    <location>
        <position position="72"/>
    </location>
</feature>
<feature type="modified residue" description="N6-acetyllysine" evidence="2">
    <location>
        <position position="255"/>
    </location>
</feature>
<feature type="modified residue" description="N6-acetyllysine" evidence="3">
    <location>
        <position position="501"/>
    </location>
</feature>
<sequence length="559" mass="64399">MSLEVVRAAAGMVLAELYVSDREGNDVTGDGTKEKPFKTGLKALMTVGKEPFPTIYVDSQKENERWDVISKSQMKNIRKLWHREQMKSESREKKEAEDNLRREKNLEEAKKITIKNDPSLPEPKCVKIRELKGYRGQRIKVFGWVHRLRRQGKNLMFLVLRDGTGFLQCVLSDDLCQCYNGVVLSTESSVAVYGVLNLTPKGKQAPGGHELSCDFWELIGLAPAGGADNLINEESDVDVQLNNRHMMIRGENMSKILKARSVITRCFRDHFFDRGYHEITPPTLVQTQVEGGATLFKLDYFGEEAYLTQSSQLYLETCIPALGDVFCIAQSYRAEQSRTRRHLAEYTHVEAECPFLTFEELLNRLEDLVCDVVDRVLKSPAGNIVRDLNPNFKPPKRPFKRMNYSDAIVWLKEHNIKKEDGTFYEFGEDIPEAPERLMTDTINEPILLCRFPVEIKSFYMQRCPEDPRLTESVDVLMPNVGEIVGGSMRIWDNEEILAGYKREGIDPTPYYWYTDQRKYGTCPHGGYGLGLERFLTWILDRYHIRDVCLYPRFVQRCKP</sequence>
<proteinExistence type="evidence at transcript level"/>
<protein>
    <recommendedName>
        <fullName>Asparagine--tRNA ligase, cytoplasmic</fullName>
        <ecNumber>6.1.1.22</ecNumber>
    </recommendedName>
    <alternativeName>
        <fullName>Asparaginyl-tRNA synthetase</fullName>
        <shortName>AsnRS</shortName>
    </alternativeName>
</protein>